<protein>
    <recommendedName>
        <fullName>Clampless protein 1</fullName>
        <shortName>CLP1</shortName>
    </recommendedName>
</protein>
<evidence type="ECO:0000255" key="1"/>
<evidence type="ECO:0000269" key="2">
    <source>
    </source>
</evidence>
<proteinExistence type="evidence at transcript level"/>
<reference key="1">
    <citation type="journal article" date="2005" name="Science">
        <title>The genome of the basidiomycetous yeast and human pathogen Cryptococcus neoformans.</title>
        <authorList>
            <person name="Loftus B.J."/>
            <person name="Fung E."/>
            <person name="Roncaglia P."/>
            <person name="Rowley D."/>
            <person name="Amedeo P."/>
            <person name="Bruno D."/>
            <person name="Vamathevan J."/>
            <person name="Miranda M."/>
            <person name="Anderson I.J."/>
            <person name="Fraser J.A."/>
            <person name="Allen J.E."/>
            <person name="Bosdet I.E."/>
            <person name="Brent M.R."/>
            <person name="Chiu R."/>
            <person name="Doering T.L."/>
            <person name="Donlin M.J."/>
            <person name="D'Souza C.A."/>
            <person name="Fox D.S."/>
            <person name="Grinberg V."/>
            <person name="Fu J."/>
            <person name="Fukushima M."/>
            <person name="Haas B.J."/>
            <person name="Huang J.C."/>
            <person name="Janbon G."/>
            <person name="Jones S.J.M."/>
            <person name="Koo H.L."/>
            <person name="Krzywinski M.I."/>
            <person name="Kwon-Chung K.J."/>
            <person name="Lengeler K.B."/>
            <person name="Maiti R."/>
            <person name="Marra M.A."/>
            <person name="Marra R.E."/>
            <person name="Mathewson C.A."/>
            <person name="Mitchell T.G."/>
            <person name="Pertea M."/>
            <person name="Riggs F.R."/>
            <person name="Salzberg S.L."/>
            <person name="Schein J.E."/>
            <person name="Shvartsbeyn A."/>
            <person name="Shin H."/>
            <person name="Shumway M."/>
            <person name="Specht C.A."/>
            <person name="Suh B.B."/>
            <person name="Tenney A."/>
            <person name="Utterback T.R."/>
            <person name="Wickes B.L."/>
            <person name="Wortman J.R."/>
            <person name="Wye N.H."/>
            <person name="Kronstad J.W."/>
            <person name="Lodge J.K."/>
            <person name="Heitman J."/>
            <person name="Davis R.W."/>
            <person name="Fraser C.M."/>
            <person name="Hyman R.W."/>
        </authorList>
    </citation>
    <scope>NUCLEOTIDE SEQUENCE [LARGE SCALE GENOMIC DNA]</scope>
    <source>
        <strain>JEC21 / ATCC MYA-565</strain>
    </source>
</reference>
<reference key="2">
    <citation type="journal article" date="2008" name="Eukaryot. Cell">
        <title>Sexual development in Cryptococcus neoformans requires CLP1, a target of the homeodomain transcription factors Sxi1alpha and Sxi2a.</title>
        <authorList>
            <person name="Ekena J.L."/>
            <person name="Stanton B.C."/>
            <person name="Schiebe-Owens J.A."/>
            <person name="Hull C.M."/>
        </authorList>
    </citation>
    <scope>IDENTIFICATION</scope>
    <scope>FUNCTION</scope>
    <scope>DEVELOPMENTAL STAGE</scope>
    <scope>DISRUPTION PHENOTYPE</scope>
    <source>
        <strain>JEC21 / ATCC MYA-565</strain>
    </source>
</reference>
<sequence length="472" mass="51822">MATYLAPPVSSNKENSPAPNIALSDIDAISLSLRTSLSGVTLPAKKKVAALGLGRAPKFTYRRHSNKPYNRSTSITRAKKAAVQTKSVRSKAAVKKSNTRPLPLKLVQRLDVESARLERLRKAVWNPPAPVPGQVRVPLKLPYPRFPSIEYIDNEYLKEIPVQYIFDRMVPLLPSIATITLAYQPYASIPHPDSKILRDTTLAFAIPEVIDGRKPHWAAKARGREPDLALAVAYKSGEGSNGNTVVAVNSLAFATQCAYWPRLLTTSIPIPTPKRPTPSASAVSTSLPAIVETEENVSDASFSSSSSWSDSDSEVEFIDLPRLPRPVKDDKGFLHLPLVELPIPSPSTFPIIHRHLHHPSRALLPDLLGLPEHYTTRSQVLDAISGLSVQQLMDKLTTLQGVWQNLCSLGIGRLGTWRQLGEAWACVVGVIAGQGLLIAGQEEAEVQRTGRKTAAEDVAWEWVRREKAKEQQ</sequence>
<gene>
    <name type="ordered locus">CNB01190</name>
</gene>
<accession>P0CP18</accession>
<accession>B0BNN5</accession>
<accession>Q55XA9</accession>
<accession>Q5KMM4</accession>
<name>CLMP1_CRYNJ</name>
<feature type="chain" id="PRO_0000394762" description="Clampless protein 1">
    <location>
        <begin position="1"/>
        <end position="472"/>
    </location>
</feature>
<feature type="glycosylation site" description="N-linked (GlcNAc...) asparagine" evidence="1">
    <location>
        <position position="70"/>
    </location>
</feature>
<feature type="glycosylation site" description="N-linked (GlcNAc...) asparagine" evidence="1">
    <location>
        <position position="296"/>
    </location>
</feature>
<organism>
    <name type="scientific">Cryptococcus neoformans var. neoformans serotype D (strain JEC21 / ATCC MYA-565)</name>
    <name type="common">Filobasidiella neoformans</name>
    <dbReference type="NCBI Taxonomy" id="214684"/>
    <lineage>
        <taxon>Eukaryota</taxon>
        <taxon>Fungi</taxon>
        <taxon>Dikarya</taxon>
        <taxon>Basidiomycota</taxon>
        <taxon>Agaricomycotina</taxon>
        <taxon>Tremellomycetes</taxon>
        <taxon>Tremellales</taxon>
        <taxon>Cryptococcaceae</taxon>
        <taxon>Cryptococcus</taxon>
        <taxon>Cryptococcus neoformans species complex</taxon>
    </lineage>
</organism>
<dbReference type="EMBL" id="AE017342">
    <property type="protein sequence ID" value="AAW41485.1"/>
    <property type="molecule type" value="Genomic_DNA"/>
</dbReference>
<dbReference type="EMBL" id="BK006302">
    <property type="protein sequence ID" value="DAA06128.1"/>
    <property type="molecule type" value="Genomic_DNA"/>
</dbReference>
<dbReference type="RefSeq" id="XP_568792.1">
    <property type="nucleotide sequence ID" value="XM_568792.1"/>
</dbReference>
<dbReference type="PaxDb" id="214684-P0CP18"/>
<dbReference type="EnsemblFungi" id="AAW41485">
    <property type="protein sequence ID" value="AAW41485"/>
    <property type="gene ID" value="CNB01190"/>
</dbReference>
<dbReference type="GeneID" id="3255560"/>
<dbReference type="KEGG" id="cne:CNB01190"/>
<dbReference type="VEuPathDB" id="FungiDB:CNB01190"/>
<dbReference type="eggNOG" id="ENOG502SCZS">
    <property type="taxonomic scope" value="Eukaryota"/>
</dbReference>
<dbReference type="HOGENOM" id="CLU_581412_0_0_1"/>
<dbReference type="InParanoid" id="P0CP18"/>
<dbReference type="OMA" id="MATYLAP"/>
<dbReference type="OrthoDB" id="2570975at2759"/>
<dbReference type="Proteomes" id="UP000002149">
    <property type="component" value="Chromosome 2"/>
</dbReference>
<dbReference type="GO" id="GO:0000905">
    <property type="term" value="P:sporocarp development involved in asexual reproduction"/>
    <property type="evidence" value="ECO:0000315"/>
    <property type="project" value="UniProtKB"/>
</dbReference>
<dbReference type="GO" id="GO:0000909">
    <property type="term" value="P:sporocarp development involved in sexual reproduction"/>
    <property type="evidence" value="ECO:0000315"/>
    <property type="project" value="UniProtKB"/>
</dbReference>
<comment type="function">
    <text evidence="2">Required for developmental progression after cells of opposite mating types fuse with one another, essential for processes common to both dikaryotic filament formation and monokaryotic fruiting. A direct target for transcription factors Sxi1-alpha and Sxi2-a.</text>
</comment>
<comment type="developmental stage">
    <text evidence="2">Expressed abundantly under sexual development conditions.</text>
</comment>
<comment type="disruption phenotype">
    <text evidence="2">Expression is not seen in haploid cells where both copies of the gene are deleted and there is no discernible phenotype with respect to haplotype growth in strains with complete deletions. However, there is a complete absence of sexual development and strains fail to form dikaryotic filaments/spores. Where only a single copy is present in a wild-type and mutant mating pair sexual development is indistinguishable from a wild-type mating pair. Expression is up-regulated during sexual development.</text>
</comment>
<keyword id="KW-0325">Glycoprotein</keyword>
<keyword id="KW-1185">Reference proteome</keyword>